<accession>Q71YB5</accession>
<comment type="function">
    <text evidence="1">Catalyzes the pyruvoyl-dependent decarboxylation of aspartate to produce beta-alanine.</text>
</comment>
<comment type="catalytic activity">
    <reaction evidence="1">
        <text>L-aspartate + H(+) = beta-alanine + CO2</text>
        <dbReference type="Rhea" id="RHEA:19497"/>
        <dbReference type="ChEBI" id="CHEBI:15378"/>
        <dbReference type="ChEBI" id="CHEBI:16526"/>
        <dbReference type="ChEBI" id="CHEBI:29991"/>
        <dbReference type="ChEBI" id="CHEBI:57966"/>
        <dbReference type="EC" id="4.1.1.11"/>
    </reaction>
</comment>
<comment type="cofactor">
    <cofactor evidence="1">
        <name>pyruvate</name>
        <dbReference type="ChEBI" id="CHEBI:15361"/>
    </cofactor>
    <text evidence="1">Binds 1 pyruvoyl group covalently per subunit.</text>
</comment>
<comment type="pathway">
    <text evidence="1">Cofactor biosynthesis; (R)-pantothenate biosynthesis; beta-alanine from L-aspartate: step 1/1.</text>
</comment>
<comment type="subunit">
    <text evidence="1">Heterooctamer of four alpha and four beta subunits.</text>
</comment>
<comment type="subcellular location">
    <subcellularLocation>
        <location evidence="1">Cytoplasm</location>
    </subcellularLocation>
</comment>
<comment type="PTM">
    <text evidence="1">Is synthesized initially as an inactive proenzyme, which is activated by self-cleavage at a specific serine bond to produce a beta-subunit with a hydroxyl group at its C-terminus and an alpha-subunit with a pyruvoyl group at its N-terminus.</text>
</comment>
<comment type="similarity">
    <text evidence="1">Belongs to the PanD family.</text>
</comment>
<organism>
    <name type="scientific">Listeria monocytogenes serotype 4b (strain F2365)</name>
    <dbReference type="NCBI Taxonomy" id="265669"/>
    <lineage>
        <taxon>Bacteria</taxon>
        <taxon>Bacillati</taxon>
        <taxon>Bacillota</taxon>
        <taxon>Bacilli</taxon>
        <taxon>Bacillales</taxon>
        <taxon>Listeriaceae</taxon>
        <taxon>Listeria</taxon>
    </lineage>
</organism>
<evidence type="ECO:0000255" key="1">
    <source>
        <dbReference type="HAMAP-Rule" id="MF_00446"/>
    </source>
</evidence>
<gene>
    <name evidence="1" type="primary">panD</name>
    <name type="ordered locus">LMOf2365_1929</name>
</gene>
<proteinExistence type="inferred from homology"/>
<keyword id="KW-0068">Autocatalytic cleavage</keyword>
<keyword id="KW-0963">Cytoplasm</keyword>
<keyword id="KW-0210">Decarboxylase</keyword>
<keyword id="KW-0456">Lyase</keyword>
<keyword id="KW-0566">Pantothenate biosynthesis</keyword>
<keyword id="KW-0670">Pyruvate</keyword>
<keyword id="KW-0704">Schiff base</keyword>
<keyword id="KW-0865">Zymogen</keyword>
<feature type="chain" id="PRO_0000023107" description="Aspartate 1-decarboxylase beta chain" evidence="1">
    <location>
        <begin position="1"/>
        <end position="24"/>
    </location>
</feature>
<feature type="chain" id="PRO_0000023108" description="Aspartate 1-decarboxylase alpha chain" evidence="1">
    <location>
        <begin position="25"/>
        <end position="127"/>
    </location>
</feature>
<feature type="active site" description="Schiff-base intermediate with substrate; via pyruvic acid" evidence="1">
    <location>
        <position position="25"/>
    </location>
</feature>
<feature type="active site" description="Proton donor" evidence="1">
    <location>
        <position position="58"/>
    </location>
</feature>
<feature type="binding site" evidence="1">
    <location>
        <position position="57"/>
    </location>
    <ligand>
        <name>substrate</name>
    </ligand>
</feature>
<feature type="binding site" evidence="1">
    <location>
        <begin position="73"/>
        <end position="75"/>
    </location>
    <ligand>
        <name>substrate</name>
    </ligand>
</feature>
<feature type="modified residue" description="Pyruvic acid (Ser)" evidence="1">
    <location>
        <position position="25"/>
    </location>
</feature>
<dbReference type="EC" id="4.1.1.11" evidence="1"/>
<dbReference type="EMBL" id="AE017262">
    <property type="protein sequence ID" value="AAT04699.1"/>
    <property type="molecule type" value="Genomic_DNA"/>
</dbReference>
<dbReference type="RefSeq" id="WP_003728013.1">
    <property type="nucleotide sequence ID" value="NC_002973.6"/>
</dbReference>
<dbReference type="SMR" id="Q71YB5"/>
<dbReference type="GeneID" id="87011001"/>
<dbReference type="KEGG" id="lmf:LMOf2365_1929"/>
<dbReference type="HOGENOM" id="CLU_115305_2_0_9"/>
<dbReference type="UniPathway" id="UPA00028">
    <property type="reaction ID" value="UER00002"/>
</dbReference>
<dbReference type="GO" id="GO:0005829">
    <property type="term" value="C:cytosol"/>
    <property type="evidence" value="ECO:0007669"/>
    <property type="project" value="TreeGrafter"/>
</dbReference>
<dbReference type="GO" id="GO:0004068">
    <property type="term" value="F:aspartate 1-decarboxylase activity"/>
    <property type="evidence" value="ECO:0007669"/>
    <property type="project" value="UniProtKB-UniRule"/>
</dbReference>
<dbReference type="GO" id="GO:0006523">
    <property type="term" value="P:alanine biosynthetic process"/>
    <property type="evidence" value="ECO:0007669"/>
    <property type="project" value="InterPro"/>
</dbReference>
<dbReference type="GO" id="GO:0015940">
    <property type="term" value="P:pantothenate biosynthetic process"/>
    <property type="evidence" value="ECO:0007669"/>
    <property type="project" value="UniProtKB-UniRule"/>
</dbReference>
<dbReference type="CDD" id="cd06919">
    <property type="entry name" value="Asp_decarbox"/>
    <property type="match status" value="1"/>
</dbReference>
<dbReference type="Gene3D" id="2.40.40.20">
    <property type="match status" value="1"/>
</dbReference>
<dbReference type="HAMAP" id="MF_00446">
    <property type="entry name" value="PanD"/>
    <property type="match status" value="1"/>
</dbReference>
<dbReference type="InterPro" id="IPR009010">
    <property type="entry name" value="Asp_de-COase-like_dom_sf"/>
</dbReference>
<dbReference type="InterPro" id="IPR003190">
    <property type="entry name" value="Asp_decarbox"/>
</dbReference>
<dbReference type="NCBIfam" id="TIGR00223">
    <property type="entry name" value="panD"/>
    <property type="match status" value="1"/>
</dbReference>
<dbReference type="PANTHER" id="PTHR21012">
    <property type="entry name" value="ASPARTATE 1-DECARBOXYLASE"/>
    <property type="match status" value="1"/>
</dbReference>
<dbReference type="PANTHER" id="PTHR21012:SF0">
    <property type="entry name" value="ASPARTATE 1-DECARBOXYLASE"/>
    <property type="match status" value="1"/>
</dbReference>
<dbReference type="Pfam" id="PF02261">
    <property type="entry name" value="Asp_decarbox"/>
    <property type="match status" value="1"/>
</dbReference>
<dbReference type="PIRSF" id="PIRSF006246">
    <property type="entry name" value="Asp_decarbox"/>
    <property type="match status" value="1"/>
</dbReference>
<dbReference type="SUPFAM" id="SSF50692">
    <property type="entry name" value="ADC-like"/>
    <property type="match status" value="1"/>
</dbReference>
<sequence length="127" mass="13915">MFRTMMNGKIHRATVTEANLNYVGSITIDSAILEAVDMLPNEKVQIVNNNNGARIETYIIPGEPGSGVICLNGAAARHVQVGDVVIIMSYGMFTAEEAKTHEPKIVVLDEKNHIEMILPEEKAHTTL</sequence>
<reference key="1">
    <citation type="journal article" date="2004" name="Nucleic Acids Res.">
        <title>Whole genome comparisons of serotype 4b and 1/2a strains of the food-borne pathogen Listeria monocytogenes reveal new insights into the core genome components of this species.</title>
        <authorList>
            <person name="Nelson K.E."/>
            <person name="Fouts D.E."/>
            <person name="Mongodin E.F."/>
            <person name="Ravel J."/>
            <person name="DeBoy R.T."/>
            <person name="Kolonay J.F."/>
            <person name="Rasko D.A."/>
            <person name="Angiuoli S.V."/>
            <person name="Gill S.R."/>
            <person name="Paulsen I.T."/>
            <person name="Peterson J.D."/>
            <person name="White O."/>
            <person name="Nelson W.C."/>
            <person name="Nierman W.C."/>
            <person name="Beanan M.J."/>
            <person name="Brinkac L.M."/>
            <person name="Daugherty S.C."/>
            <person name="Dodson R.J."/>
            <person name="Durkin A.S."/>
            <person name="Madupu R."/>
            <person name="Haft D.H."/>
            <person name="Selengut J."/>
            <person name="Van Aken S.E."/>
            <person name="Khouri H.M."/>
            <person name="Fedorova N."/>
            <person name="Forberger H.A."/>
            <person name="Tran B."/>
            <person name="Kathariou S."/>
            <person name="Wonderling L.D."/>
            <person name="Uhlich G.A."/>
            <person name="Bayles D.O."/>
            <person name="Luchansky J.B."/>
            <person name="Fraser C.M."/>
        </authorList>
    </citation>
    <scope>NUCLEOTIDE SEQUENCE [LARGE SCALE GENOMIC DNA]</scope>
    <source>
        <strain>F2365</strain>
    </source>
</reference>
<name>PAND_LISMF</name>
<protein>
    <recommendedName>
        <fullName evidence="1">Aspartate 1-decarboxylase</fullName>
        <ecNumber evidence="1">4.1.1.11</ecNumber>
    </recommendedName>
    <alternativeName>
        <fullName evidence="1">Aspartate alpha-decarboxylase</fullName>
    </alternativeName>
    <component>
        <recommendedName>
            <fullName evidence="1">Aspartate 1-decarboxylase beta chain</fullName>
        </recommendedName>
    </component>
    <component>
        <recommendedName>
            <fullName evidence="1">Aspartate 1-decarboxylase alpha chain</fullName>
        </recommendedName>
    </component>
</protein>